<evidence type="ECO:0000250" key="1"/>
<evidence type="ECO:0000256" key="2">
    <source>
        <dbReference type="SAM" id="MobiDB-lite"/>
    </source>
</evidence>
<comment type="function">
    <text evidence="1">Essential for biological clock functions. Determines the period length of circadian and ultradian rhythms; an increase in PER dosage leads to shortened circadian rhythms and a decrease leads to lengthened circadian rhythms. Essential for the circadian rhythmicity of locomotor activity, eclosion behavior, and for the rhythmic component of the male courtship song that originates in the thoracic nervous system. The biological cycle depends on the rhythmic formation and nuclear localization of the TIM-PER complex. Light induces the degradation of TIM, which promotes elimination of PER. Nuclear activity of the heterodimer coordinatively regulates PER and TIM transcription through a negative feedback loop. Behaves as a negative element in circadian transcriptional loop. Does not appear to bind DNA, suggesting indirect transcriptional inhibition (By similarity).</text>
</comment>
<comment type="subunit">
    <text evidence="1">Forms a heterodimer with timeless (TIM); the complex then translocates into the nucleus.</text>
</comment>
<comment type="subcellular location">
    <subcellularLocation>
        <location evidence="1">Nucleus</location>
    </subcellularLocation>
    <subcellularLocation>
        <location evidence="1">Cytoplasm</location>
        <location evidence="1">Perinuclear region</location>
    </subcellularLocation>
    <text evidence="1">Nuclear at specific periods of the day. First accumulates in the perinuclear region about one hour before translocation into the nucleus. Interaction with Tim is required for nuclear localization (By similarity).</text>
</comment>
<comment type="domain">
    <text evidence="1">The run of Gly-Thr is implicated in the maintenance of circadian period at different temperatures. Deletion of the repeat leads to a shortening of the courtship song cycle period, and thus could be important for determining features of species-specific mating behavior (By similarity).</text>
</comment>
<comment type="PTM">
    <text evidence="1">Phosphorylated with a circadian rhythmicity, probably by the double-time protein (dbt). Phosphorylation could be implicated in the stability of per monomer and in the formation of heterodimer per-tim (By similarity).</text>
</comment>
<name>PER_DROER</name>
<protein>
    <recommendedName>
        <fullName>Period circadian protein</fullName>
    </recommendedName>
</protein>
<sequence>GGSGGSGSSGNFTTASNIHMSSVTNTSIAGTGGTGGTGTGTGTGTGTGTGTGTGTDTGTGTGTRNGTNSGTNSGTRTGTASSYRGGGGGAGGGGGVTIQHLTLTESLLNK</sequence>
<keyword id="KW-0090">Biological rhythms</keyword>
<keyword id="KW-0963">Cytoplasm</keyword>
<keyword id="KW-0539">Nucleus</keyword>
<keyword id="KW-0597">Phosphoprotein</keyword>
<keyword id="KW-0677">Repeat</keyword>
<gene>
    <name type="primary">per</name>
</gene>
<accession>Q26288</accession>
<proteinExistence type="inferred from homology"/>
<reference key="1">
    <citation type="journal article" date="1992" name="J. Mol. Evol.">
        <title>Evolution of the threonine-glycine repeat region of the period gene in the melanogaster species subgroup of Drosophila.</title>
        <authorList>
            <person name="Peixoto A.A."/>
            <person name="Costa R."/>
            <person name="Wheeler D.A."/>
            <person name="Hall J.C."/>
            <person name="Kyriacou C.P."/>
        </authorList>
    </citation>
    <scope>NUCLEOTIDE SEQUENCE [GENOMIC DNA]</scope>
</reference>
<organism>
    <name type="scientific">Drosophila erecta</name>
    <name type="common">Fruit fly</name>
    <dbReference type="NCBI Taxonomy" id="7220"/>
    <lineage>
        <taxon>Eukaryota</taxon>
        <taxon>Metazoa</taxon>
        <taxon>Ecdysozoa</taxon>
        <taxon>Arthropoda</taxon>
        <taxon>Hexapoda</taxon>
        <taxon>Insecta</taxon>
        <taxon>Pterygota</taxon>
        <taxon>Neoptera</taxon>
        <taxon>Endopterygota</taxon>
        <taxon>Diptera</taxon>
        <taxon>Brachycera</taxon>
        <taxon>Muscomorpha</taxon>
        <taxon>Ephydroidea</taxon>
        <taxon>Drosophilidae</taxon>
        <taxon>Drosophila</taxon>
        <taxon>Sophophora</taxon>
    </lineage>
</organism>
<feature type="chain" id="PRO_0000162592" description="Period circadian protein">
    <location>
        <begin position="1" status="less than"/>
        <end position="110" status="greater than"/>
    </location>
</feature>
<feature type="repeat" description="1">
    <location>
        <begin position="30"/>
        <end position="31"/>
    </location>
</feature>
<feature type="repeat" description="2">
    <location>
        <begin position="33"/>
        <end position="34"/>
    </location>
</feature>
<feature type="repeat" description="3">
    <location>
        <begin position="36"/>
        <end position="37"/>
    </location>
</feature>
<feature type="repeat" description="4">
    <location>
        <begin position="38"/>
        <end position="39"/>
    </location>
</feature>
<feature type="repeat" description="5">
    <location>
        <begin position="40"/>
        <end position="41"/>
    </location>
</feature>
<feature type="repeat" description="6">
    <location>
        <begin position="42"/>
        <end position="43"/>
    </location>
</feature>
<feature type="repeat" description="7">
    <location>
        <begin position="44"/>
        <end position="45"/>
    </location>
</feature>
<feature type="repeat" description="8">
    <location>
        <begin position="46"/>
        <end position="47"/>
    </location>
</feature>
<feature type="repeat" description="9">
    <location>
        <begin position="48"/>
        <end position="49"/>
    </location>
</feature>
<feature type="repeat" description="10">
    <location>
        <begin position="50"/>
        <end position="51"/>
    </location>
</feature>
<feature type="repeat" description="11">
    <location>
        <begin position="52"/>
        <end position="53"/>
    </location>
</feature>
<feature type="repeat" description="12">
    <location>
        <begin position="54"/>
        <end position="55"/>
    </location>
</feature>
<feature type="repeat" description="13; approximate">
    <location>
        <begin position="56"/>
        <end position="57"/>
    </location>
</feature>
<feature type="repeat" description="14">
    <location>
        <begin position="58"/>
        <end position="59"/>
    </location>
</feature>
<feature type="repeat" description="15">
    <location>
        <begin position="60"/>
        <end position="61"/>
    </location>
</feature>
<feature type="repeat" description="16">
    <location>
        <begin position="62"/>
        <end position="63"/>
    </location>
</feature>
<feature type="repeat" description="17; approximate">
    <location>
        <begin position="64"/>
        <end position="65"/>
    </location>
</feature>
<feature type="repeat" description="18">
    <location>
        <begin position="66"/>
        <end position="67"/>
    </location>
</feature>
<feature type="repeat" description="19; approximate">
    <location>
        <begin position="68"/>
        <end position="69"/>
    </location>
</feature>
<feature type="repeat" description="20">
    <location>
        <begin position="70"/>
        <end position="71"/>
    </location>
</feature>
<feature type="repeat" description="21; approximate">
    <location>
        <begin position="72"/>
        <end position="73"/>
    </location>
</feature>
<feature type="repeat" description="22">
    <location>
        <begin position="74"/>
        <end position="75"/>
    </location>
</feature>
<feature type="repeat" description="23; approximate">
    <location>
        <begin position="76"/>
        <end position="77"/>
    </location>
</feature>
<feature type="repeat" description="24">
    <location>
        <begin position="78"/>
        <end position="79"/>
    </location>
</feature>
<feature type="region of interest" description="Disordered" evidence="2">
    <location>
        <begin position="23"/>
        <end position="97"/>
    </location>
</feature>
<feature type="region of interest" description="24 X 2 AA approximate tandem repeats of G-T">
    <location>
        <begin position="30"/>
        <end position="79"/>
    </location>
</feature>
<feature type="compositionally biased region" description="Gly residues" evidence="2">
    <location>
        <begin position="30"/>
        <end position="63"/>
    </location>
</feature>
<feature type="compositionally biased region" description="Low complexity" evidence="2">
    <location>
        <begin position="64"/>
        <end position="83"/>
    </location>
</feature>
<feature type="compositionally biased region" description="Gly residues" evidence="2">
    <location>
        <begin position="84"/>
        <end position="96"/>
    </location>
</feature>
<feature type="non-terminal residue">
    <location>
        <position position="1"/>
    </location>
</feature>
<feature type="non-terminal residue">
    <location>
        <position position="110"/>
    </location>
</feature>
<dbReference type="EMBL" id="S53301">
    <property type="protein sequence ID" value="AAB25031.2"/>
    <property type="molecule type" value="Genomic_DNA"/>
</dbReference>
<dbReference type="eggNOG" id="KOG3753">
    <property type="taxonomic scope" value="Eukaryota"/>
</dbReference>
<dbReference type="GO" id="GO:0005634">
    <property type="term" value="C:nucleus"/>
    <property type="evidence" value="ECO:0007669"/>
    <property type="project" value="UniProtKB-SubCell"/>
</dbReference>
<dbReference type="GO" id="GO:0048471">
    <property type="term" value="C:perinuclear region of cytoplasm"/>
    <property type="evidence" value="ECO:0007669"/>
    <property type="project" value="UniProtKB-SubCell"/>
</dbReference>
<dbReference type="GO" id="GO:0048511">
    <property type="term" value="P:rhythmic process"/>
    <property type="evidence" value="ECO:0007669"/>
    <property type="project" value="UniProtKB-KW"/>
</dbReference>